<protein>
    <recommendedName>
        <fullName evidence="1">Bifunctional polymyxin resistance protein ArnA</fullName>
    </recommendedName>
    <domain>
        <recommendedName>
            <fullName evidence="1">UDP-4-amino-4-deoxy-L-arabinose formyltransferase</fullName>
            <ecNumber evidence="1">2.1.2.13</ecNumber>
        </recommendedName>
        <alternativeName>
            <fullName evidence="1">ArnAFT</fullName>
        </alternativeName>
        <alternativeName>
            <fullName evidence="1">UDP-L-Ara4N formyltransferase</fullName>
        </alternativeName>
    </domain>
    <domain>
        <recommendedName>
            <fullName evidence="1">UDP-glucuronic acid oxidase, UDP-4-keto-hexauronic acid decarboxylating</fullName>
            <ecNumber evidence="1">1.1.1.305</ecNumber>
        </recommendedName>
        <alternativeName>
            <fullName evidence="1">ArnADH</fullName>
        </alternativeName>
        <alternativeName>
            <fullName evidence="1">UDP-GlcUA decarboxylase</fullName>
        </alternativeName>
        <alternativeName>
            <fullName evidence="1">UDP-glucuronic acid dehydrogenase</fullName>
        </alternativeName>
    </domain>
</protein>
<gene>
    <name evidence="1" type="primary">arnA</name>
    <name type="ordered locus">SCH_2300.1</name>
</gene>
<organism>
    <name type="scientific">Salmonella choleraesuis (strain SC-B67)</name>
    <dbReference type="NCBI Taxonomy" id="321314"/>
    <lineage>
        <taxon>Bacteria</taxon>
        <taxon>Pseudomonadati</taxon>
        <taxon>Pseudomonadota</taxon>
        <taxon>Gammaproteobacteria</taxon>
        <taxon>Enterobacterales</taxon>
        <taxon>Enterobacteriaceae</taxon>
        <taxon>Salmonella</taxon>
    </lineage>
</organism>
<feature type="chain" id="PRO_0000083106" description="Bifunctional polymyxin resistance protein ArnA">
    <location>
        <begin position="1"/>
        <end position="660"/>
    </location>
</feature>
<feature type="region of interest" description="Formyltransferase ArnAFT">
    <location>
        <begin position="1"/>
        <end position="304"/>
    </location>
</feature>
<feature type="region of interest" description="Dehydrogenase ArnADH">
    <location>
        <begin position="314"/>
        <end position="660"/>
    </location>
</feature>
<feature type="active site" description="Proton donor; for formyltransferase activity" evidence="1">
    <location>
        <position position="104"/>
    </location>
</feature>
<feature type="active site" description="Proton acceptor; for decarboxylase activity" evidence="1">
    <location>
        <position position="434"/>
    </location>
</feature>
<feature type="active site" description="Proton donor; for decarboxylase activity" evidence="1">
    <location>
        <position position="619"/>
    </location>
</feature>
<feature type="binding site" evidence="1">
    <location>
        <position position="114"/>
    </location>
    <ligand>
        <name>(6R)-10-formyltetrahydrofolate</name>
        <dbReference type="ChEBI" id="CHEBI:195366"/>
    </ligand>
</feature>
<feature type="binding site" evidence="1">
    <location>
        <begin position="136"/>
        <end position="140"/>
    </location>
    <ligand>
        <name>(6R)-10-formyltetrahydrofolate</name>
        <dbReference type="ChEBI" id="CHEBI:195366"/>
    </ligand>
</feature>
<feature type="binding site" evidence="1">
    <location>
        <position position="347"/>
    </location>
    <ligand>
        <name>NAD(+)</name>
        <dbReference type="ChEBI" id="CHEBI:57540"/>
    </ligand>
</feature>
<feature type="binding site" evidence="1">
    <location>
        <begin position="368"/>
        <end position="369"/>
    </location>
    <ligand>
        <name>NAD(+)</name>
        <dbReference type="ChEBI" id="CHEBI:57540"/>
    </ligand>
</feature>
<feature type="binding site" evidence="1">
    <location>
        <position position="393"/>
    </location>
    <ligand>
        <name>UDP-alpha-D-glucuronate</name>
        <dbReference type="ChEBI" id="CHEBI:58052"/>
    </ligand>
</feature>
<feature type="binding site" evidence="1">
    <location>
        <position position="398"/>
    </location>
    <ligand>
        <name>UDP-alpha-D-glucuronate</name>
        <dbReference type="ChEBI" id="CHEBI:58052"/>
    </ligand>
</feature>
<feature type="binding site" evidence="1">
    <location>
        <begin position="432"/>
        <end position="433"/>
    </location>
    <ligand>
        <name>UDP-alpha-D-glucuronate</name>
        <dbReference type="ChEBI" id="CHEBI:58052"/>
    </ligand>
</feature>
<feature type="binding site" evidence="1">
    <location>
        <position position="460"/>
    </location>
    <ligand>
        <name>UDP-alpha-D-glucuronate</name>
        <dbReference type="ChEBI" id="CHEBI:58052"/>
    </ligand>
</feature>
<feature type="binding site" evidence="1">
    <location>
        <position position="492"/>
    </location>
    <ligand>
        <name>UDP-alpha-D-glucuronate</name>
        <dbReference type="ChEBI" id="CHEBI:58052"/>
    </ligand>
</feature>
<feature type="binding site" evidence="1">
    <location>
        <begin position="526"/>
        <end position="535"/>
    </location>
    <ligand>
        <name>UDP-alpha-D-glucuronate</name>
        <dbReference type="ChEBI" id="CHEBI:58052"/>
    </ligand>
</feature>
<feature type="binding site" evidence="1">
    <location>
        <position position="613"/>
    </location>
    <ligand>
        <name>UDP-alpha-D-glucuronate</name>
        <dbReference type="ChEBI" id="CHEBI:58052"/>
    </ligand>
</feature>
<feature type="site" description="Transition state stabilizer" evidence="1">
    <location>
        <position position="102"/>
    </location>
</feature>
<feature type="site" description="Raises pKa of active site His" evidence="1">
    <location>
        <position position="140"/>
    </location>
</feature>
<proteinExistence type="inferred from homology"/>
<sequence>MKAVIFAYHDMGCQGVQAVLDAGYEIAAIFTHADNPAENTFFGSVSRLAAGLGIPVYAPDNVNHPIWVDRIAELAPDIIFSFYYRNLLSEEILHLAPAGAFNLHGSLLPAYRGRAPLNWVLVNGESETGVTLHRMVKRADAGEIVASQRVAIAQDDVALTLHHKLCQAARQLLNSILPTMKCGDIPSVPQRESDATYYGRRRPEDGLIDWHKPVSTVHNLVRAVAAPWPGAFSYNGSQKFTIWSSRICPDAQGVLPGSVISVSPLRVACADGALEIITGQAGDGITVQGSQLAQTLGLVAGARLNRPPATSGKRRIRVLILGVNGFIGNHLTERLLNEENYEVYGMDIGSNAISRFLLHPRFHFVEGDISIHSEWIEYHVKKCDVVLPLVAIATPIEYTRNPLRVFELDFEENLRIIRYCVKYRKRVVFPSTSEVYGMCTDASFDEDKSNLIVGPVNKPRWIYSVSKQLLDRVIWAYGEKEGLRFTLFRPFNWMGPRLDSLSAARIGSSRAITQLILNLVEGTPIKLIDGGQQKRCFTDIRDGIEALFRIIVNEGDRCDGKIINIGNPDNEASIQELATLLLDSFDKHPLRCHFPPFAGFQVVASRSYYGKGYQDVAHRKPSIDNARRCLGWEPSIAMRDTVEETLDFFLRSVDVAERAS</sequence>
<reference key="1">
    <citation type="journal article" date="2005" name="Nucleic Acids Res.">
        <title>The genome sequence of Salmonella enterica serovar Choleraesuis, a highly invasive and resistant zoonotic pathogen.</title>
        <authorList>
            <person name="Chiu C.-H."/>
            <person name="Tang P."/>
            <person name="Chu C."/>
            <person name="Hu S."/>
            <person name="Bao Q."/>
            <person name="Yu J."/>
            <person name="Chou Y.-Y."/>
            <person name="Wang H.-S."/>
            <person name="Lee Y.-S."/>
        </authorList>
    </citation>
    <scope>NUCLEOTIDE SEQUENCE [LARGE SCALE GENOMIC DNA]</scope>
    <source>
        <strain>SC-B67</strain>
    </source>
</reference>
<keyword id="KW-0046">Antibiotic resistance</keyword>
<keyword id="KW-0441">Lipid A biosynthesis</keyword>
<keyword id="KW-0444">Lipid biosynthesis</keyword>
<keyword id="KW-0443">Lipid metabolism</keyword>
<keyword id="KW-0448">Lipopolysaccharide biosynthesis</keyword>
<keyword id="KW-0511">Multifunctional enzyme</keyword>
<keyword id="KW-0520">NAD</keyword>
<keyword id="KW-0560">Oxidoreductase</keyword>
<keyword id="KW-0808">Transferase</keyword>
<dbReference type="EC" id="2.1.2.13" evidence="1"/>
<dbReference type="EC" id="1.1.1.305" evidence="1"/>
<dbReference type="EMBL" id="AE017220">
    <property type="status" value="NOT_ANNOTATED_CDS"/>
    <property type="molecule type" value="Genomic_DNA"/>
</dbReference>
<dbReference type="SMR" id="P0C0R6"/>
<dbReference type="UniPathway" id="UPA00030"/>
<dbReference type="UniPathway" id="UPA00032">
    <property type="reaction ID" value="UER00492"/>
</dbReference>
<dbReference type="UniPathway" id="UPA00032">
    <property type="reaction ID" value="UER00494"/>
</dbReference>
<dbReference type="Proteomes" id="UP000000538">
    <property type="component" value="Chromosome"/>
</dbReference>
<dbReference type="GO" id="GO:0016020">
    <property type="term" value="C:membrane"/>
    <property type="evidence" value="ECO:0007669"/>
    <property type="project" value="GOC"/>
</dbReference>
<dbReference type="GO" id="GO:0016831">
    <property type="term" value="F:carboxy-lyase activity"/>
    <property type="evidence" value="ECO:0007669"/>
    <property type="project" value="InterPro"/>
</dbReference>
<dbReference type="GO" id="GO:0099619">
    <property type="term" value="F:UDP-4-amino-4-deoxy-L-arabinose formyltransferase activity"/>
    <property type="evidence" value="ECO:0007669"/>
    <property type="project" value="UniProtKB-EC"/>
</dbReference>
<dbReference type="GO" id="GO:0099618">
    <property type="term" value="F:UDP-glucuronate dehydrogenase activity"/>
    <property type="evidence" value="ECO:0007669"/>
    <property type="project" value="UniProtKB-EC"/>
</dbReference>
<dbReference type="GO" id="GO:0009245">
    <property type="term" value="P:lipid A biosynthetic process"/>
    <property type="evidence" value="ECO:0007669"/>
    <property type="project" value="UniProtKB-KW"/>
</dbReference>
<dbReference type="GO" id="GO:0009103">
    <property type="term" value="P:lipopolysaccharide biosynthetic process"/>
    <property type="evidence" value="ECO:0007669"/>
    <property type="project" value="UniProtKB-UniRule"/>
</dbReference>
<dbReference type="GO" id="GO:0046677">
    <property type="term" value="P:response to antibiotic"/>
    <property type="evidence" value="ECO:0007669"/>
    <property type="project" value="UniProtKB-KW"/>
</dbReference>
<dbReference type="CDD" id="cd08702">
    <property type="entry name" value="Arna_FMT_C"/>
    <property type="match status" value="1"/>
</dbReference>
<dbReference type="CDD" id="cd05257">
    <property type="entry name" value="Arna_like_SDR_e"/>
    <property type="match status" value="1"/>
</dbReference>
<dbReference type="FunFam" id="3.40.50.720:FF:000197">
    <property type="entry name" value="Bifunctional polymyxin resistance protein ArnA"/>
    <property type="match status" value="1"/>
</dbReference>
<dbReference type="Gene3D" id="3.40.50.12230">
    <property type="match status" value="1"/>
</dbReference>
<dbReference type="Gene3D" id="3.40.50.720">
    <property type="entry name" value="NAD(P)-binding Rossmann-like Domain"/>
    <property type="match status" value="1"/>
</dbReference>
<dbReference type="HAMAP" id="MF_01166">
    <property type="entry name" value="ArnA"/>
    <property type="match status" value="1"/>
</dbReference>
<dbReference type="InterPro" id="IPR045869">
    <property type="entry name" value="Arna-like_SDR_e"/>
</dbReference>
<dbReference type="InterPro" id="IPR021168">
    <property type="entry name" value="Bifun_polymyxin_resist_ArnA"/>
</dbReference>
<dbReference type="InterPro" id="IPR001509">
    <property type="entry name" value="Epimerase_deHydtase"/>
</dbReference>
<dbReference type="InterPro" id="IPR005793">
    <property type="entry name" value="Formyl_trans_C"/>
</dbReference>
<dbReference type="InterPro" id="IPR002376">
    <property type="entry name" value="Formyl_transf_N"/>
</dbReference>
<dbReference type="InterPro" id="IPR036477">
    <property type="entry name" value="Formyl_transf_N_sf"/>
</dbReference>
<dbReference type="InterPro" id="IPR011034">
    <property type="entry name" value="Formyl_transferase-like_C_sf"/>
</dbReference>
<dbReference type="InterPro" id="IPR050177">
    <property type="entry name" value="Lipid_A_modif_metabolic_enz"/>
</dbReference>
<dbReference type="InterPro" id="IPR036291">
    <property type="entry name" value="NAD(P)-bd_dom_sf"/>
</dbReference>
<dbReference type="NCBIfam" id="NF005414">
    <property type="entry name" value="PRK06988.1"/>
    <property type="match status" value="1"/>
</dbReference>
<dbReference type="NCBIfam" id="NF005998">
    <property type="entry name" value="PRK08125.1"/>
    <property type="match status" value="1"/>
</dbReference>
<dbReference type="NCBIfam" id="NF008872">
    <property type="entry name" value="PRK11908.1"/>
    <property type="match status" value="1"/>
</dbReference>
<dbReference type="PANTHER" id="PTHR43245">
    <property type="entry name" value="BIFUNCTIONAL POLYMYXIN RESISTANCE PROTEIN ARNA"/>
    <property type="match status" value="1"/>
</dbReference>
<dbReference type="PANTHER" id="PTHR43245:SF13">
    <property type="entry name" value="UDP-D-APIOSE_UDP-D-XYLOSE SYNTHASE 2"/>
    <property type="match status" value="1"/>
</dbReference>
<dbReference type="Pfam" id="PF01370">
    <property type="entry name" value="Epimerase"/>
    <property type="match status" value="1"/>
</dbReference>
<dbReference type="Pfam" id="PF02911">
    <property type="entry name" value="Formyl_trans_C"/>
    <property type="match status" value="1"/>
</dbReference>
<dbReference type="Pfam" id="PF00551">
    <property type="entry name" value="Formyl_trans_N"/>
    <property type="match status" value="1"/>
</dbReference>
<dbReference type="PIRSF" id="PIRSF036506">
    <property type="entry name" value="Bifun_polymyxin_resist_ArnA"/>
    <property type="match status" value="1"/>
</dbReference>
<dbReference type="SUPFAM" id="SSF50486">
    <property type="entry name" value="FMT C-terminal domain-like"/>
    <property type="match status" value="1"/>
</dbReference>
<dbReference type="SUPFAM" id="SSF53328">
    <property type="entry name" value="Formyltransferase"/>
    <property type="match status" value="1"/>
</dbReference>
<dbReference type="SUPFAM" id="SSF51735">
    <property type="entry name" value="NAD(P)-binding Rossmann-fold domains"/>
    <property type="match status" value="1"/>
</dbReference>
<comment type="function">
    <text evidence="1">Bifunctional enzyme that catalyzes the oxidative decarboxylation of UDP-glucuronic acid (UDP-GlcUA) to UDP-4-keto-arabinose (UDP-Ara4O) and the addition of a formyl group to UDP-4-amino-4-deoxy-L-arabinose (UDP-L-Ara4N) to form UDP-L-4-formamido-arabinose (UDP-L-Ara4FN). The modified arabinose is attached to lipid A and is required for resistance to polymyxin and cationic antimicrobial peptides.</text>
</comment>
<comment type="catalytic activity">
    <reaction evidence="1">
        <text>UDP-alpha-D-glucuronate + NAD(+) = UDP-beta-L-threo-pentopyranos-4-ulose + CO2 + NADH</text>
        <dbReference type="Rhea" id="RHEA:24702"/>
        <dbReference type="ChEBI" id="CHEBI:16526"/>
        <dbReference type="ChEBI" id="CHEBI:57540"/>
        <dbReference type="ChEBI" id="CHEBI:57945"/>
        <dbReference type="ChEBI" id="CHEBI:58052"/>
        <dbReference type="ChEBI" id="CHEBI:58710"/>
        <dbReference type="EC" id="1.1.1.305"/>
    </reaction>
</comment>
<comment type="catalytic activity">
    <reaction evidence="1">
        <text>UDP-4-amino-4-deoxy-beta-L-arabinose + (6R)-10-formyltetrahydrofolate = UDP-4-deoxy-4-formamido-beta-L-arabinose + (6S)-5,6,7,8-tetrahydrofolate + H(+)</text>
        <dbReference type="Rhea" id="RHEA:24706"/>
        <dbReference type="ChEBI" id="CHEBI:15378"/>
        <dbReference type="ChEBI" id="CHEBI:57453"/>
        <dbReference type="ChEBI" id="CHEBI:58708"/>
        <dbReference type="ChEBI" id="CHEBI:58709"/>
        <dbReference type="ChEBI" id="CHEBI:195366"/>
        <dbReference type="EC" id="2.1.2.13"/>
    </reaction>
</comment>
<comment type="pathway">
    <text evidence="1">Nucleotide-sugar biosynthesis; UDP-4-deoxy-4-formamido-beta-L-arabinose biosynthesis; UDP-4-deoxy-4-formamido-beta-L-arabinose from UDP-alpha-D-glucuronate: step 1/3.</text>
</comment>
<comment type="pathway">
    <text evidence="1">Nucleotide-sugar biosynthesis; UDP-4-deoxy-4-formamido-beta-L-arabinose biosynthesis; UDP-4-deoxy-4-formamido-beta-L-arabinose from UDP-alpha-D-glucuronate: step 3/3.</text>
</comment>
<comment type="pathway">
    <text evidence="1">Bacterial outer membrane biogenesis; lipopolysaccharide biosynthesis.</text>
</comment>
<comment type="subunit">
    <text evidence="1">Homohexamer, formed by a dimer of trimers.</text>
</comment>
<comment type="similarity">
    <text evidence="1">In the N-terminal section; belongs to the Fmt family. UDP-L-Ara4N formyltransferase subfamily.</text>
</comment>
<comment type="similarity">
    <text evidence="1">In the C-terminal section; belongs to the NAD(P)-dependent epimerase/dehydratase family. UDP-glucuronic acid decarboxylase subfamily.</text>
</comment>
<comment type="sequence caution" evidence="2">
    <conflict type="frameshift">
        <sequence resource="EMBL" id="AE017220"/>
    </conflict>
</comment>
<accession>P0C0R6</accession>
<name>ARNA_SALCH</name>
<evidence type="ECO:0000255" key="1">
    <source>
        <dbReference type="HAMAP-Rule" id="MF_01166"/>
    </source>
</evidence>
<evidence type="ECO:0000305" key="2"/>